<organism>
    <name type="scientific">Arabidopsis thaliana</name>
    <name type="common">Mouse-ear cress</name>
    <dbReference type="NCBI Taxonomy" id="3702"/>
    <lineage>
        <taxon>Eukaryota</taxon>
        <taxon>Viridiplantae</taxon>
        <taxon>Streptophyta</taxon>
        <taxon>Embryophyta</taxon>
        <taxon>Tracheophyta</taxon>
        <taxon>Spermatophyta</taxon>
        <taxon>Magnoliopsida</taxon>
        <taxon>eudicotyledons</taxon>
        <taxon>Gunneridae</taxon>
        <taxon>Pentapetalae</taxon>
        <taxon>rosids</taxon>
        <taxon>malvids</taxon>
        <taxon>Brassicales</taxon>
        <taxon>Brassicaceae</taxon>
        <taxon>Camelineae</taxon>
        <taxon>Arabidopsis</taxon>
    </lineage>
</organism>
<reference key="1">
    <citation type="journal article" date="1997" name="DNA Res.">
        <title>Structural analysis of Arabidopsis thaliana chromosome 5. I. Sequence features of the 1.6 Mb regions covered by twenty physically assigned P1 clones.</title>
        <authorList>
            <person name="Sato S."/>
            <person name="Kotani H."/>
            <person name="Nakamura Y."/>
            <person name="Kaneko T."/>
            <person name="Asamizu E."/>
            <person name="Fukami M."/>
            <person name="Miyajima N."/>
            <person name="Tabata S."/>
        </authorList>
    </citation>
    <scope>NUCLEOTIDE SEQUENCE [LARGE SCALE GENOMIC DNA]</scope>
    <source>
        <strain>cv. Columbia</strain>
    </source>
</reference>
<reference key="2">
    <citation type="journal article" date="2017" name="Plant J.">
        <title>Araport11: a complete reannotation of the Arabidopsis thaliana reference genome.</title>
        <authorList>
            <person name="Cheng C.Y."/>
            <person name="Krishnakumar V."/>
            <person name="Chan A.P."/>
            <person name="Thibaud-Nissen F."/>
            <person name="Schobel S."/>
            <person name="Town C.D."/>
        </authorList>
    </citation>
    <scope>GENOME REANNOTATION</scope>
    <source>
        <strain>cv. Columbia</strain>
    </source>
</reference>
<reference key="3">
    <citation type="journal article" date="2004" name="Genome Res.">
        <title>Whole genome sequence comparisons and 'full-length' cDNA sequences: a combined approach to evaluate and improve Arabidopsis genome annotation.</title>
        <authorList>
            <person name="Castelli V."/>
            <person name="Aury J.-M."/>
            <person name="Jaillon O."/>
            <person name="Wincker P."/>
            <person name="Clepet C."/>
            <person name="Menard M."/>
            <person name="Cruaud C."/>
            <person name="Quetier F."/>
            <person name="Scarpelli C."/>
            <person name="Schaechter V."/>
            <person name="Temple G."/>
            <person name="Caboche M."/>
            <person name="Weissenbach J."/>
            <person name="Salanoubat M."/>
        </authorList>
    </citation>
    <scope>NUCLEOTIDE SEQUENCE [LARGE SCALE MRNA] OF 1-356 (ISOFORM 1)</scope>
    <source>
        <strain>cv. Columbia</strain>
    </source>
</reference>
<reference key="4">
    <citation type="submission" date="2006-12" db="EMBL/GenBank/DDBJ databases">
        <title>Arabidopsis ORF clones.</title>
        <authorList>
            <person name="Bautista V.R."/>
            <person name="Kim C.J."/>
            <person name="Chen H."/>
            <person name="Quinitio C."/>
            <person name="Ecker J.R."/>
        </authorList>
    </citation>
    <scope>NUCLEOTIDE SEQUENCE [LARGE SCALE MRNA] (ISOFORM 2)</scope>
    <source>
        <strain>cv. Columbia</strain>
    </source>
</reference>
<dbReference type="EMBL" id="AB005233">
    <property type="protein sequence ID" value="BAB11474.1"/>
    <property type="molecule type" value="Genomic_DNA"/>
</dbReference>
<dbReference type="EMBL" id="CP002688">
    <property type="protein sequence ID" value="AED94707.1"/>
    <property type="molecule type" value="Genomic_DNA"/>
</dbReference>
<dbReference type="EMBL" id="CP002688">
    <property type="protein sequence ID" value="AED94708.1"/>
    <property type="molecule type" value="Genomic_DNA"/>
</dbReference>
<dbReference type="EMBL" id="BX832557">
    <property type="status" value="NOT_ANNOTATED_CDS"/>
    <property type="molecule type" value="mRNA"/>
</dbReference>
<dbReference type="EMBL" id="BT029482">
    <property type="protein sequence ID" value="ABL66739.1"/>
    <property type="molecule type" value="mRNA"/>
</dbReference>
<dbReference type="RefSeq" id="NP_198983.2">
    <molecule id="Q3E8J4-1"/>
    <property type="nucleotide sequence ID" value="NM_123532.4"/>
</dbReference>
<dbReference type="RefSeq" id="NP_974867.1">
    <molecule id="Q3E8J4-2"/>
    <property type="nucleotide sequence ID" value="NM_203138.3"/>
</dbReference>
<dbReference type="SMR" id="Q3E8J4"/>
<dbReference type="FunCoup" id="Q3E8J4">
    <property type="interactions" value="7"/>
</dbReference>
<dbReference type="PaxDb" id="3702-AT5G41680.1"/>
<dbReference type="EnsemblPlants" id="AT5G41680.1">
    <molecule id="Q3E8J4-1"/>
    <property type="protein sequence ID" value="AT5G41680.1"/>
    <property type="gene ID" value="AT5G41680"/>
</dbReference>
<dbReference type="EnsemblPlants" id="AT5G41680.2">
    <molecule id="Q3E8J4-2"/>
    <property type="protein sequence ID" value="AT5G41680.2"/>
    <property type="gene ID" value="AT5G41680"/>
</dbReference>
<dbReference type="GeneID" id="834170"/>
<dbReference type="Gramene" id="AT5G41680.1">
    <molecule id="Q3E8J4-1"/>
    <property type="protein sequence ID" value="AT5G41680.1"/>
    <property type="gene ID" value="AT5G41680"/>
</dbReference>
<dbReference type="Gramene" id="AT5G41680.2">
    <molecule id="Q3E8J4-2"/>
    <property type="protein sequence ID" value="AT5G41680.2"/>
    <property type="gene ID" value="AT5G41680"/>
</dbReference>
<dbReference type="KEGG" id="ath:AT5G41680"/>
<dbReference type="Araport" id="AT5G41680"/>
<dbReference type="TAIR" id="AT5G41680"/>
<dbReference type="eggNOG" id="KOG1187">
    <property type="taxonomic scope" value="Eukaryota"/>
</dbReference>
<dbReference type="InParanoid" id="Q3E8J4"/>
<dbReference type="OMA" id="MIQDIPT"/>
<dbReference type="PhylomeDB" id="Q3E8J4"/>
<dbReference type="PRO" id="PR:Q3E8J4"/>
<dbReference type="Proteomes" id="UP000006548">
    <property type="component" value="Chromosome 5"/>
</dbReference>
<dbReference type="ExpressionAtlas" id="Q3E8J4">
    <property type="expression patterns" value="baseline and differential"/>
</dbReference>
<dbReference type="GO" id="GO:0005524">
    <property type="term" value="F:ATP binding"/>
    <property type="evidence" value="ECO:0007669"/>
    <property type="project" value="UniProtKB-KW"/>
</dbReference>
<dbReference type="GO" id="GO:0004672">
    <property type="term" value="F:protein kinase activity"/>
    <property type="evidence" value="ECO:0007669"/>
    <property type="project" value="InterPro"/>
</dbReference>
<dbReference type="FunFam" id="3.30.200.20:FF:000307">
    <property type="entry name" value="pollen receptor-like kinase 1"/>
    <property type="match status" value="1"/>
</dbReference>
<dbReference type="FunFam" id="1.10.510.10:FF:000095">
    <property type="entry name" value="protein STRUBBELIG-RECEPTOR FAMILY 8"/>
    <property type="match status" value="1"/>
</dbReference>
<dbReference type="Gene3D" id="3.30.200.20">
    <property type="entry name" value="Phosphorylase Kinase, domain 1"/>
    <property type="match status" value="1"/>
</dbReference>
<dbReference type="Gene3D" id="1.10.510.10">
    <property type="entry name" value="Transferase(Phosphotransferase) domain 1"/>
    <property type="match status" value="1"/>
</dbReference>
<dbReference type="InterPro" id="IPR050994">
    <property type="entry name" value="At_inactive_RLKs"/>
</dbReference>
<dbReference type="InterPro" id="IPR011009">
    <property type="entry name" value="Kinase-like_dom_sf"/>
</dbReference>
<dbReference type="InterPro" id="IPR000719">
    <property type="entry name" value="Prot_kinase_dom"/>
</dbReference>
<dbReference type="InterPro" id="IPR001245">
    <property type="entry name" value="Ser-Thr/Tyr_kinase_cat_dom"/>
</dbReference>
<dbReference type="PANTHER" id="PTHR48010">
    <property type="entry name" value="OS05G0588300 PROTEIN"/>
    <property type="match status" value="1"/>
</dbReference>
<dbReference type="PANTHER" id="PTHR48010:SF48">
    <property type="entry name" value="PROTEIN KINASE DOMAIN-CONTAINING PROTEIN"/>
    <property type="match status" value="1"/>
</dbReference>
<dbReference type="Pfam" id="PF07714">
    <property type="entry name" value="PK_Tyr_Ser-Thr"/>
    <property type="match status" value="1"/>
</dbReference>
<dbReference type="SUPFAM" id="SSF56112">
    <property type="entry name" value="Protein kinase-like (PK-like)"/>
    <property type="match status" value="1"/>
</dbReference>
<dbReference type="PROSITE" id="PS50011">
    <property type="entry name" value="PROTEIN_KINASE_DOM"/>
    <property type="match status" value="1"/>
</dbReference>
<name>Y5168_ARATH</name>
<keyword id="KW-0025">Alternative splicing</keyword>
<keyword id="KW-0067">ATP-binding</keyword>
<keyword id="KW-0547">Nucleotide-binding</keyword>
<keyword id="KW-1185">Reference proteome</keyword>
<accession>Q3E8J4</accession>
<accession>Q9FFR2</accession>
<feature type="chain" id="PRO_0000389470" description="Probably inactive receptor-like protein kinase At5g41680">
    <location>
        <begin position="1"/>
        <end position="359"/>
    </location>
</feature>
<feature type="domain" description="Protein kinase" evidence="1">
    <location>
        <begin position="59"/>
        <end position="357"/>
    </location>
</feature>
<feature type="binding site" evidence="1">
    <location>
        <begin position="65"/>
        <end position="73"/>
    </location>
    <ligand>
        <name>ATP</name>
        <dbReference type="ChEBI" id="CHEBI:30616"/>
    </ligand>
</feature>
<feature type="binding site" evidence="1">
    <location>
        <position position="87"/>
    </location>
    <ligand>
        <name>ATP</name>
        <dbReference type="ChEBI" id="CHEBI:30616"/>
    </ligand>
</feature>
<feature type="splice variant" id="VSP_038436" description="In isoform 2." evidence="2">
    <location>
        <begin position="146"/>
        <end position="171"/>
    </location>
</feature>
<evidence type="ECO:0000255" key="1">
    <source>
        <dbReference type="PROSITE-ProRule" id="PRU00159"/>
    </source>
</evidence>
<evidence type="ECO:0000303" key="2">
    <source ref="4"/>
</evidence>
<proteinExistence type="evidence at transcript level"/>
<comment type="alternative products">
    <event type="alternative splicing"/>
    <isoform>
        <id>Q3E8J4-1</id>
        <name>1</name>
        <sequence type="displayed"/>
    </isoform>
    <isoform>
        <id>Q3E8J4-2</id>
        <name>2</name>
        <sequence type="described" ref="VSP_038436"/>
    </isoform>
</comment>
<comment type="domain">
    <text>The protein kinase domain is predicted to be catalytically inactive. Lacks the conserved Asp active site at position 208, which is replaced by an Asn residue.</text>
</comment>
<comment type="similarity">
    <text evidence="1">Belongs to the protein kinase superfamily. Ser/Thr protein kinase family.</text>
</comment>
<protein>
    <recommendedName>
        <fullName>Probably inactive receptor-like protein kinase At5g41680</fullName>
    </recommendedName>
</protein>
<gene>
    <name type="ordered locus">At5g41680</name>
    <name type="ORF">MBK23.22</name>
</gene>
<sequence length="359" mass="40290">MMACCLRNKRRMKGKLSWKSKKRDLSHSGNWAPEDDNDEGKIVFFGGSNYTFDLDDLLAASAEILGKGAHVTTYKVAVEDTATVVVKRLEEVVVGRREFEQQMEIVGRIRHDNVAELKAYYYSKIDKLAVYSYYSQGNLFEMLHGKLSFCIPLSMLLWYAVSKTNNSTFAGESQVPLDWESRLRIAIGAARGLAIIHEADDGKFVHGNIKSSNIFTNSKCYGCICDLGLTHITKSLPQTTLRSSGYHAPEITDTRKSTQFSDVYSFGVVLLELLTGKSPASPLSLDENMDLASWIRSVVSKEWTGEVFDNELMMQMGIEEELVEMLQIGLACVALKPQDRPHITHIVKLIQDIPTNFNL</sequence>